<proteinExistence type="inferred from homology"/>
<comment type="function">
    <text evidence="1">Catalyzes the synthesis of GMP from XMP.</text>
</comment>
<comment type="catalytic activity">
    <reaction>
        <text>XMP + L-glutamine + ATP + H2O = GMP + L-glutamate + AMP + diphosphate + 2 H(+)</text>
        <dbReference type="Rhea" id="RHEA:11680"/>
        <dbReference type="ChEBI" id="CHEBI:15377"/>
        <dbReference type="ChEBI" id="CHEBI:15378"/>
        <dbReference type="ChEBI" id="CHEBI:29985"/>
        <dbReference type="ChEBI" id="CHEBI:30616"/>
        <dbReference type="ChEBI" id="CHEBI:33019"/>
        <dbReference type="ChEBI" id="CHEBI:57464"/>
        <dbReference type="ChEBI" id="CHEBI:58115"/>
        <dbReference type="ChEBI" id="CHEBI:58359"/>
        <dbReference type="ChEBI" id="CHEBI:456215"/>
        <dbReference type="EC" id="6.3.5.2"/>
    </reaction>
</comment>
<comment type="pathway">
    <text>Purine metabolism; GMP biosynthesis; GMP from XMP (L-Gln route): step 1/1.</text>
</comment>
<protein>
    <recommendedName>
        <fullName>GMP synthase [glutamine-hydrolyzing]</fullName>
        <ecNumber>6.3.5.2</ecNumber>
    </recommendedName>
    <alternativeName>
        <fullName>GMP synthetase</fullName>
    </alternativeName>
    <alternativeName>
        <fullName>Glutamine amidotransferase</fullName>
    </alternativeName>
</protein>
<gene>
    <name type="primary">guaA</name>
    <name type="ordered locus">APE_2452</name>
</gene>
<sequence length="512" mass="55735">MAKTLDSPGVLVVDFGGQYAHLIARRIRELGVYSEIVPATSLDALGEALPRAAGVVLSGGPGSVWGSRHDEAAAMVLQLGKPVLGICYGHQLLAKVLGGEVGRSPLPEFGPTEVEVLDYGILLNGLPSRFKVWMSHYDAVLRPPGEAKVLARTPGSPVAAMELWGRVFGVQWHPEVRHTQYGREVLDNWLSLVGAPRTWRPGDMVSELVESVKKEVGDALAVAAVSGGVDSTVAALIAKKAIGSRLYPVFIDHGLHPEGEVERVVKLLSRLGLEPVMVDAGEEFLAALEGVGDPEEKRRVVGRVYAEVLERAARDIGAEYLVQGTIYPDVIESGARPGADTIKTHHNVGGLPKDMRLKLVEPLRYFYKDEVRLLAEKLGVPRELIWKQPVPGPGLAVRVEGPITREKLRIVRRADAIVREEVEAAGLGGKLWQYFAVLTASMATGVRGDSRSYGYVVAVRAVESVDAMTAKPAELPWWLLERIARRITSEIPEVVRVVYDITSKPPSTIEWE</sequence>
<dbReference type="EC" id="6.3.5.2"/>
<dbReference type="EMBL" id="BA000002">
    <property type="protein sequence ID" value="BAA81467.1"/>
    <property type="molecule type" value="Genomic_DNA"/>
</dbReference>
<dbReference type="PIR" id="C72476">
    <property type="entry name" value="C72476"/>
</dbReference>
<dbReference type="RefSeq" id="WP_010867015.1">
    <property type="nucleotide sequence ID" value="NC_000854.2"/>
</dbReference>
<dbReference type="SMR" id="Q9Y933"/>
<dbReference type="STRING" id="272557.APE_2452"/>
<dbReference type="MEROPS" id="C26.A31"/>
<dbReference type="EnsemblBacteria" id="BAA81467">
    <property type="protein sequence ID" value="BAA81467"/>
    <property type="gene ID" value="APE_2452"/>
</dbReference>
<dbReference type="GeneID" id="1445429"/>
<dbReference type="KEGG" id="ape:APE_2452"/>
<dbReference type="PATRIC" id="fig|272557.25.peg.1628"/>
<dbReference type="eggNOG" id="arCOG00085">
    <property type="taxonomic scope" value="Archaea"/>
</dbReference>
<dbReference type="UniPathway" id="UPA00189">
    <property type="reaction ID" value="UER00296"/>
</dbReference>
<dbReference type="Proteomes" id="UP000002518">
    <property type="component" value="Chromosome"/>
</dbReference>
<dbReference type="GO" id="GO:0005829">
    <property type="term" value="C:cytosol"/>
    <property type="evidence" value="ECO:0007669"/>
    <property type="project" value="TreeGrafter"/>
</dbReference>
<dbReference type="GO" id="GO:0005524">
    <property type="term" value="F:ATP binding"/>
    <property type="evidence" value="ECO:0007669"/>
    <property type="project" value="UniProtKB-UniRule"/>
</dbReference>
<dbReference type="GO" id="GO:0003921">
    <property type="term" value="F:GMP synthase activity"/>
    <property type="evidence" value="ECO:0007669"/>
    <property type="project" value="InterPro"/>
</dbReference>
<dbReference type="CDD" id="cd01742">
    <property type="entry name" value="GATase1_GMP_Synthase"/>
    <property type="match status" value="1"/>
</dbReference>
<dbReference type="CDD" id="cd01997">
    <property type="entry name" value="GMP_synthase_C"/>
    <property type="match status" value="1"/>
</dbReference>
<dbReference type="FunFam" id="3.30.300.10:FF:000002">
    <property type="entry name" value="GMP synthase [glutamine-hydrolyzing]"/>
    <property type="match status" value="1"/>
</dbReference>
<dbReference type="Gene3D" id="3.30.300.10">
    <property type="match status" value="1"/>
</dbReference>
<dbReference type="Gene3D" id="3.40.50.880">
    <property type="match status" value="1"/>
</dbReference>
<dbReference type="Gene3D" id="3.40.50.620">
    <property type="entry name" value="HUPs"/>
    <property type="match status" value="1"/>
</dbReference>
<dbReference type="HAMAP" id="MF_00344">
    <property type="entry name" value="GMP_synthase"/>
    <property type="match status" value="1"/>
</dbReference>
<dbReference type="InterPro" id="IPR029062">
    <property type="entry name" value="Class_I_gatase-like"/>
</dbReference>
<dbReference type="InterPro" id="IPR017926">
    <property type="entry name" value="GATASE"/>
</dbReference>
<dbReference type="InterPro" id="IPR001674">
    <property type="entry name" value="GMP_synth_C"/>
</dbReference>
<dbReference type="InterPro" id="IPR004739">
    <property type="entry name" value="GMP_synth_GATase"/>
</dbReference>
<dbReference type="InterPro" id="IPR022955">
    <property type="entry name" value="GMP_synthase"/>
</dbReference>
<dbReference type="InterPro" id="IPR025777">
    <property type="entry name" value="GMPS_ATP_PPase_dom"/>
</dbReference>
<dbReference type="InterPro" id="IPR022310">
    <property type="entry name" value="NAD/GMP_synthase"/>
</dbReference>
<dbReference type="InterPro" id="IPR014729">
    <property type="entry name" value="Rossmann-like_a/b/a_fold"/>
</dbReference>
<dbReference type="NCBIfam" id="TIGR00884">
    <property type="entry name" value="guaA_Cterm"/>
    <property type="match status" value="1"/>
</dbReference>
<dbReference type="NCBIfam" id="TIGR00888">
    <property type="entry name" value="guaA_Nterm"/>
    <property type="match status" value="1"/>
</dbReference>
<dbReference type="NCBIfam" id="NF000848">
    <property type="entry name" value="PRK00074.1"/>
    <property type="match status" value="1"/>
</dbReference>
<dbReference type="PANTHER" id="PTHR11922:SF2">
    <property type="entry name" value="GMP SYNTHASE [GLUTAMINE-HYDROLYZING]"/>
    <property type="match status" value="1"/>
</dbReference>
<dbReference type="PANTHER" id="PTHR11922">
    <property type="entry name" value="GMP SYNTHASE-RELATED"/>
    <property type="match status" value="1"/>
</dbReference>
<dbReference type="Pfam" id="PF00117">
    <property type="entry name" value="GATase"/>
    <property type="match status" value="1"/>
</dbReference>
<dbReference type="Pfam" id="PF00958">
    <property type="entry name" value="GMP_synt_C"/>
    <property type="match status" value="1"/>
</dbReference>
<dbReference type="Pfam" id="PF02540">
    <property type="entry name" value="NAD_synthase"/>
    <property type="match status" value="1"/>
</dbReference>
<dbReference type="PRINTS" id="PR00097">
    <property type="entry name" value="ANTSNTHASEII"/>
</dbReference>
<dbReference type="PRINTS" id="PR00099">
    <property type="entry name" value="CPSGATASE"/>
</dbReference>
<dbReference type="PRINTS" id="PR00096">
    <property type="entry name" value="GATASE"/>
</dbReference>
<dbReference type="SUPFAM" id="SSF52402">
    <property type="entry name" value="Adenine nucleotide alpha hydrolases-like"/>
    <property type="match status" value="1"/>
</dbReference>
<dbReference type="SUPFAM" id="SSF52317">
    <property type="entry name" value="Class I glutamine amidotransferase-like"/>
    <property type="match status" value="1"/>
</dbReference>
<dbReference type="PROSITE" id="PS51273">
    <property type="entry name" value="GATASE_TYPE_1"/>
    <property type="match status" value="1"/>
</dbReference>
<dbReference type="PROSITE" id="PS51553">
    <property type="entry name" value="GMPS_ATP_PPASE"/>
    <property type="match status" value="1"/>
</dbReference>
<name>GUAA_AERPE</name>
<organism>
    <name type="scientific">Aeropyrum pernix (strain ATCC 700893 / DSM 11879 / JCM 9820 / NBRC 100138 / K1)</name>
    <dbReference type="NCBI Taxonomy" id="272557"/>
    <lineage>
        <taxon>Archaea</taxon>
        <taxon>Thermoproteota</taxon>
        <taxon>Thermoprotei</taxon>
        <taxon>Desulfurococcales</taxon>
        <taxon>Desulfurococcaceae</taxon>
        <taxon>Aeropyrum</taxon>
    </lineage>
</organism>
<feature type="chain" id="PRO_0000140215" description="GMP synthase [glutamine-hydrolyzing]">
    <location>
        <begin position="1"/>
        <end position="512"/>
    </location>
</feature>
<feature type="domain" description="Glutamine amidotransferase type-1">
    <location>
        <begin position="9"/>
        <end position="198"/>
    </location>
</feature>
<feature type="domain" description="GMPS ATP-PPase">
    <location>
        <begin position="199"/>
        <end position="387"/>
    </location>
</feature>
<feature type="active site" description="Nucleophile" evidence="1">
    <location>
        <position position="87"/>
    </location>
</feature>
<feature type="active site" evidence="1">
    <location>
        <position position="173"/>
    </location>
</feature>
<feature type="active site" evidence="1">
    <location>
        <position position="175"/>
    </location>
</feature>
<feature type="binding site" evidence="1">
    <location>
        <begin position="226"/>
        <end position="232"/>
    </location>
    <ligand>
        <name>ATP</name>
        <dbReference type="ChEBI" id="CHEBI:30616"/>
    </ligand>
</feature>
<keyword id="KW-0067">ATP-binding</keyword>
<keyword id="KW-0315">Glutamine amidotransferase</keyword>
<keyword id="KW-0332">GMP biosynthesis</keyword>
<keyword id="KW-0436">Ligase</keyword>
<keyword id="KW-0547">Nucleotide-binding</keyword>
<keyword id="KW-0658">Purine biosynthesis</keyword>
<keyword id="KW-1185">Reference proteome</keyword>
<evidence type="ECO:0000250" key="1"/>
<accession>Q9Y933</accession>
<reference key="1">
    <citation type="journal article" date="1999" name="DNA Res.">
        <title>Complete genome sequence of an aerobic hyper-thermophilic crenarchaeon, Aeropyrum pernix K1.</title>
        <authorList>
            <person name="Kawarabayasi Y."/>
            <person name="Hino Y."/>
            <person name="Horikawa H."/>
            <person name="Yamazaki S."/>
            <person name="Haikawa Y."/>
            <person name="Jin-no K."/>
            <person name="Takahashi M."/>
            <person name="Sekine M."/>
            <person name="Baba S."/>
            <person name="Ankai A."/>
            <person name="Kosugi H."/>
            <person name="Hosoyama A."/>
            <person name="Fukui S."/>
            <person name="Nagai Y."/>
            <person name="Nishijima K."/>
            <person name="Nakazawa H."/>
            <person name="Takamiya M."/>
            <person name="Masuda S."/>
            <person name="Funahashi T."/>
            <person name="Tanaka T."/>
            <person name="Kudoh Y."/>
            <person name="Yamazaki J."/>
            <person name="Kushida N."/>
            <person name="Oguchi A."/>
            <person name="Aoki K."/>
            <person name="Kubota K."/>
            <person name="Nakamura Y."/>
            <person name="Nomura N."/>
            <person name="Sako Y."/>
            <person name="Kikuchi H."/>
        </authorList>
    </citation>
    <scope>NUCLEOTIDE SEQUENCE [LARGE SCALE GENOMIC DNA]</scope>
    <source>
        <strain>ATCC 700893 / DSM 11879 / JCM 9820 / NBRC 100138 / K1</strain>
    </source>
</reference>